<name>LEUC_CROS5</name>
<comment type="function">
    <text evidence="1">Catalyzes the isomerization between 2-isopropylmalate and 3-isopropylmalate, via the formation of 2-isopropylmaleate.</text>
</comment>
<comment type="catalytic activity">
    <reaction evidence="1">
        <text>(2R,3S)-3-isopropylmalate = (2S)-2-isopropylmalate</text>
        <dbReference type="Rhea" id="RHEA:32287"/>
        <dbReference type="ChEBI" id="CHEBI:1178"/>
        <dbReference type="ChEBI" id="CHEBI:35121"/>
        <dbReference type="EC" id="4.2.1.33"/>
    </reaction>
</comment>
<comment type="cofactor">
    <cofactor evidence="1">
        <name>[4Fe-4S] cluster</name>
        <dbReference type="ChEBI" id="CHEBI:49883"/>
    </cofactor>
    <text evidence="1">Binds 1 [4Fe-4S] cluster per subunit.</text>
</comment>
<comment type="pathway">
    <text evidence="1">Amino-acid biosynthesis; L-leucine biosynthesis; L-leucine from 3-methyl-2-oxobutanoate: step 2/4.</text>
</comment>
<comment type="subunit">
    <text evidence="1">Heterodimer of LeuC and LeuD.</text>
</comment>
<comment type="similarity">
    <text evidence="1">Belongs to the aconitase/IPM isomerase family. LeuC type 1 subfamily.</text>
</comment>
<feature type="chain" id="PRO_1000149358" description="3-isopropylmalate dehydratase large subunit">
    <location>
        <begin position="1"/>
        <end position="467"/>
    </location>
</feature>
<feature type="binding site" evidence="1">
    <location>
        <position position="347"/>
    </location>
    <ligand>
        <name>[4Fe-4S] cluster</name>
        <dbReference type="ChEBI" id="CHEBI:49883"/>
    </ligand>
</feature>
<feature type="binding site" evidence="1">
    <location>
        <position position="407"/>
    </location>
    <ligand>
        <name>[4Fe-4S] cluster</name>
        <dbReference type="ChEBI" id="CHEBI:49883"/>
    </ligand>
</feature>
<feature type="binding site" evidence="1">
    <location>
        <position position="410"/>
    </location>
    <ligand>
        <name>[4Fe-4S] cluster</name>
        <dbReference type="ChEBI" id="CHEBI:49883"/>
    </ligand>
</feature>
<accession>B1WZV3</accession>
<sequence length="467" mass="50330">MSKGTLFDKVWDAHTVQILPSGQTQLFIGLHLIHEVTSPQAFAMLRERGLTVLYPDRTVATVDHIVPTEDQARPFVDTLAEEMMQALENSAKENGIRFYNIGSGNQGIVHVIAPEQGLTQPGMTIACGDSHTSTHGAFGAIAFGIGTSQVRDVLASQTLALSKLKVRKIEVNGTLPPGVYAKDVILHIIRKLGVKGGVGYAYEYAGTTFANMSMEERMTVCNMSIEGGARCGYINPDDITFDYLKGRDFAPTGDDWDKAVTWWRSMASDADAEYDDVVTFDASDIEPTVTWGITPGQGIGISEPVPTPESLPESDRAIAQEAYSYMQLSPGTPIKGTKVDVCFIGSCTNGRISDLREAAKFAKGHHVANGVKAFVVPGSERVKVQAEAEGLHKIFLEAGFEWREAGCSMCLAMNPDKLQGDQISASSSNRNFKGRQGSSTGRTLLMSPAMVVAAAVNGKVSDVRELS</sequence>
<evidence type="ECO:0000255" key="1">
    <source>
        <dbReference type="HAMAP-Rule" id="MF_01026"/>
    </source>
</evidence>
<gene>
    <name evidence="1" type="primary">leuC</name>
    <name type="ordered locus">cce_3504</name>
</gene>
<keyword id="KW-0004">4Fe-4S</keyword>
<keyword id="KW-0028">Amino-acid biosynthesis</keyword>
<keyword id="KW-0100">Branched-chain amino acid biosynthesis</keyword>
<keyword id="KW-0408">Iron</keyword>
<keyword id="KW-0411">Iron-sulfur</keyword>
<keyword id="KW-0432">Leucine biosynthesis</keyword>
<keyword id="KW-0456">Lyase</keyword>
<keyword id="KW-0479">Metal-binding</keyword>
<keyword id="KW-1185">Reference proteome</keyword>
<dbReference type="EC" id="4.2.1.33" evidence="1"/>
<dbReference type="EMBL" id="CP000806">
    <property type="protein sequence ID" value="ACB52852.1"/>
    <property type="molecule type" value="Genomic_DNA"/>
</dbReference>
<dbReference type="RefSeq" id="WP_009545329.1">
    <property type="nucleotide sequence ID" value="NC_010546.1"/>
</dbReference>
<dbReference type="SMR" id="B1WZV3"/>
<dbReference type="STRING" id="43989.cce_3504"/>
<dbReference type="KEGG" id="cyt:cce_3504"/>
<dbReference type="eggNOG" id="COG0065">
    <property type="taxonomic scope" value="Bacteria"/>
</dbReference>
<dbReference type="HOGENOM" id="CLU_006714_3_4_3"/>
<dbReference type="OrthoDB" id="9802769at2"/>
<dbReference type="UniPathway" id="UPA00048">
    <property type="reaction ID" value="UER00071"/>
</dbReference>
<dbReference type="Proteomes" id="UP000001203">
    <property type="component" value="Chromosome circular"/>
</dbReference>
<dbReference type="GO" id="GO:0003861">
    <property type="term" value="F:3-isopropylmalate dehydratase activity"/>
    <property type="evidence" value="ECO:0007669"/>
    <property type="project" value="UniProtKB-UniRule"/>
</dbReference>
<dbReference type="GO" id="GO:0051539">
    <property type="term" value="F:4 iron, 4 sulfur cluster binding"/>
    <property type="evidence" value="ECO:0007669"/>
    <property type="project" value="UniProtKB-KW"/>
</dbReference>
<dbReference type="GO" id="GO:0046872">
    <property type="term" value="F:metal ion binding"/>
    <property type="evidence" value="ECO:0007669"/>
    <property type="project" value="UniProtKB-KW"/>
</dbReference>
<dbReference type="GO" id="GO:0009098">
    <property type="term" value="P:L-leucine biosynthetic process"/>
    <property type="evidence" value="ECO:0007669"/>
    <property type="project" value="UniProtKB-UniRule"/>
</dbReference>
<dbReference type="CDD" id="cd01583">
    <property type="entry name" value="IPMI"/>
    <property type="match status" value="1"/>
</dbReference>
<dbReference type="Gene3D" id="3.30.499.10">
    <property type="entry name" value="Aconitase, domain 3"/>
    <property type="match status" value="2"/>
</dbReference>
<dbReference type="HAMAP" id="MF_01026">
    <property type="entry name" value="LeuC_type1"/>
    <property type="match status" value="1"/>
</dbReference>
<dbReference type="InterPro" id="IPR004430">
    <property type="entry name" value="3-IsopropMal_deHydase_lsu"/>
</dbReference>
<dbReference type="InterPro" id="IPR015931">
    <property type="entry name" value="Acnase/IPM_dHydase_lsu_aba_1/3"/>
</dbReference>
<dbReference type="InterPro" id="IPR001030">
    <property type="entry name" value="Acoase/IPM_deHydtase_lsu_aba"/>
</dbReference>
<dbReference type="InterPro" id="IPR018136">
    <property type="entry name" value="Aconitase_4Fe-4S_BS"/>
</dbReference>
<dbReference type="InterPro" id="IPR036008">
    <property type="entry name" value="Aconitase_4Fe-4S_dom"/>
</dbReference>
<dbReference type="InterPro" id="IPR050067">
    <property type="entry name" value="IPM_dehydratase_rel_enz"/>
</dbReference>
<dbReference type="InterPro" id="IPR033941">
    <property type="entry name" value="IPMI_cat"/>
</dbReference>
<dbReference type="NCBIfam" id="TIGR00170">
    <property type="entry name" value="leuC"/>
    <property type="match status" value="1"/>
</dbReference>
<dbReference type="NCBIfam" id="NF004016">
    <property type="entry name" value="PRK05478.1"/>
    <property type="match status" value="1"/>
</dbReference>
<dbReference type="NCBIfam" id="NF009116">
    <property type="entry name" value="PRK12466.1"/>
    <property type="match status" value="1"/>
</dbReference>
<dbReference type="PANTHER" id="PTHR43822:SF9">
    <property type="entry name" value="3-ISOPROPYLMALATE DEHYDRATASE"/>
    <property type="match status" value="1"/>
</dbReference>
<dbReference type="PANTHER" id="PTHR43822">
    <property type="entry name" value="HOMOACONITASE, MITOCHONDRIAL-RELATED"/>
    <property type="match status" value="1"/>
</dbReference>
<dbReference type="Pfam" id="PF00330">
    <property type="entry name" value="Aconitase"/>
    <property type="match status" value="1"/>
</dbReference>
<dbReference type="PRINTS" id="PR00415">
    <property type="entry name" value="ACONITASE"/>
</dbReference>
<dbReference type="SUPFAM" id="SSF53732">
    <property type="entry name" value="Aconitase iron-sulfur domain"/>
    <property type="match status" value="1"/>
</dbReference>
<dbReference type="PROSITE" id="PS00450">
    <property type="entry name" value="ACONITASE_1"/>
    <property type="match status" value="1"/>
</dbReference>
<dbReference type="PROSITE" id="PS01244">
    <property type="entry name" value="ACONITASE_2"/>
    <property type="match status" value="1"/>
</dbReference>
<organism>
    <name type="scientific">Crocosphaera subtropica (strain ATCC 51142 / BH68)</name>
    <name type="common">Cyanothece sp. (strain ATCC 51142)</name>
    <dbReference type="NCBI Taxonomy" id="43989"/>
    <lineage>
        <taxon>Bacteria</taxon>
        <taxon>Bacillati</taxon>
        <taxon>Cyanobacteriota</taxon>
        <taxon>Cyanophyceae</taxon>
        <taxon>Oscillatoriophycideae</taxon>
        <taxon>Chroococcales</taxon>
        <taxon>Aphanothecaceae</taxon>
        <taxon>Crocosphaera</taxon>
        <taxon>Crocosphaera subtropica</taxon>
    </lineage>
</organism>
<proteinExistence type="inferred from homology"/>
<reference key="1">
    <citation type="journal article" date="2008" name="Proc. Natl. Acad. Sci. U.S.A.">
        <title>The genome of Cyanothece 51142, a unicellular diazotrophic cyanobacterium important in the marine nitrogen cycle.</title>
        <authorList>
            <person name="Welsh E.A."/>
            <person name="Liberton M."/>
            <person name="Stoeckel J."/>
            <person name="Loh T."/>
            <person name="Elvitigala T."/>
            <person name="Wang C."/>
            <person name="Wollam A."/>
            <person name="Fulton R.S."/>
            <person name="Clifton S.W."/>
            <person name="Jacobs J.M."/>
            <person name="Aurora R."/>
            <person name="Ghosh B.K."/>
            <person name="Sherman L.A."/>
            <person name="Smith R.D."/>
            <person name="Wilson R.K."/>
            <person name="Pakrasi H.B."/>
        </authorList>
    </citation>
    <scope>NUCLEOTIDE SEQUENCE [LARGE SCALE GENOMIC DNA]</scope>
    <source>
        <strain>ATCC 51142 / BH68</strain>
    </source>
</reference>
<protein>
    <recommendedName>
        <fullName evidence="1">3-isopropylmalate dehydratase large subunit</fullName>
        <ecNumber evidence="1">4.2.1.33</ecNumber>
    </recommendedName>
    <alternativeName>
        <fullName evidence="1">Alpha-IPM isomerase</fullName>
        <shortName evidence="1">IPMI</shortName>
    </alternativeName>
    <alternativeName>
        <fullName evidence="1">Isopropylmalate isomerase</fullName>
    </alternativeName>
</protein>